<comment type="function">
    <text evidence="1">Part of the Sec protein translocase complex. Interacts with the SecYEG preprotein conducting channel. Has a central role in coupling the hydrolysis of ATP to the transfer of proteins into and across the cell membrane, serving both as a receptor for the preprotein-SecB complex and as an ATP-driven molecular motor driving the stepwise translocation of polypeptide chains across the membrane.</text>
</comment>
<comment type="catalytic activity">
    <reaction evidence="1">
        <text>ATP + H2O + cellular proteinSide 1 = ADP + phosphate + cellular proteinSide 2.</text>
        <dbReference type="EC" id="7.4.2.8"/>
    </reaction>
</comment>
<comment type="cofactor">
    <cofactor evidence="1">
        <name>Zn(2+)</name>
        <dbReference type="ChEBI" id="CHEBI:29105"/>
    </cofactor>
    <text evidence="1">May bind 1 zinc ion per subunit.</text>
</comment>
<comment type="subunit">
    <text evidence="1">Monomer and homodimer. Part of the essential Sec protein translocation apparatus which comprises SecA, SecYEG and auxiliary proteins SecDF-YajC and YidC.</text>
</comment>
<comment type="subcellular location">
    <subcellularLocation>
        <location evidence="1">Cell inner membrane</location>
        <topology evidence="1">Peripheral membrane protein</topology>
        <orientation evidence="1">Cytoplasmic side</orientation>
    </subcellularLocation>
    <subcellularLocation>
        <location evidence="1">Cytoplasm</location>
    </subcellularLocation>
    <text evidence="1">Distribution is 50-50.</text>
</comment>
<comment type="induction">
    <text evidence="1">Repressed under conditions of excess protein secretion capacity and derepressed when protein secretion becomes limiting. This is regulated by SecM.</text>
</comment>
<comment type="similarity">
    <text evidence="1">Belongs to the SecA family.</text>
</comment>
<name>SECA_YERP3</name>
<evidence type="ECO:0000255" key="1">
    <source>
        <dbReference type="HAMAP-Rule" id="MF_01382"/>
    </source>
</evidence>
<evidence type="ECO:0000256" key="2">
    <source>
        <dbReference type="SAM" id="MobiDB-lite"/>
    </source>
</evidence>
<gene>
    <name evidence="1" type="primary">secA</name>
    <name type="ordered locus">YpsIP31758_3378</name>
</gene>
<feature type="chain" id="PRO_0000321056" description="Protein translocase subunit SecA">
    <location>
        <begin position="1"/>
        <end position="904"/>
    </location>
</feature>
<feature type="region of interest" description="Disordered" evidence="2">
    <location>
        <begin position="851"/>
        <end position="870"/>
    </location>
</feature>
<feature type="binding site" evidence="1">
    <location>
        <position position="87"/>
    </location>
    <ligand>
        <name>ATP</name>
        <dbReference type="ChEBI" id="CHEBI:30616"/>
    </ligand>
</feature>
<feature type="binding site" evidence="1">
    <location>
        <begin position="105"/>
        <end position="109"/>
    </location>
    <ligand>
        <name>ATP</name>
        <dbReference type="ChEBI" id="CHEBI:30616"/>
    </ligand>
</feature>
<feature type="binding site" evidence="1">
    <location>
        <position position="512"/>
    </location>
    <ligand>
        <name>ATP</name>
        <dbReference type="ChEBI" id="CHEBI:30616"/>
    </ligand>
</feature>
<feature type="binding site" evidence="1">
    <location>
        <position position="888"/>
    </location>
    <ligand>
        <name>Zn(2+)</name>
        <dbReference type="ChEBI" id="CHEBI:29105"/>
    </ligand>
</feature>
<feature type="binding site" evidence="1">
    <location>
        <position position="890"/>
    </location>
    <ligand>
        <name>Zn(2+)</name>
        <dbReference type="ChEBI" id="CHEBI:29105"/>
    </ligand>
</feature>
<feature type="binding site" evidence="1">
    <location>
        <position position="899"/>
    </location>
    <ligand>
        <name>Zn(2+)</name>
        <dbReference type="ChEBI" id="CHEBI:29105"/>
    </ligand>
</feature>
<feature type="binding site" evidence="1">
    <location>
        <position position="900"/>
    </location>
    <ligand>
        <name>Zn(2+)</name>
        <dbReference type="ChEBI" id="CHEBI:29105"/>
    </ligand>
</feature>
<proteinExistence type="inferred from homology"/>
<sequence length="904" mass="102625">MLIKLLTKVFGSRNDRTLRRMQKVVDVINRMEPDIEKLTDTELRAKTDEFRERLAKGEVLENLIPEAFAVVREASKRVFGMRHFDVQLLGGMVLNERCIAEMRTGEGKTLTATLPAYLNALSGRGVHVVTVNDYLAQRDAENNRPLFEFLGLSIGINLPNMTAPAKRAAYAADITYGTNNEFGFDYLRDNMAFSPEERVQRQLHYALVDEVDSILIDEARTPLIISGPAEDSSEMYIRVNKLIPKLIRQEKEDSDSFQGEGHFSVDEKSRQVHLTERGLILIEQMLVEAGIMDEGESLYSPANIMLMHHVTAALRAHVLFTRDVDYIVKDGEVIIVDEHTGRTMQGRRWSDGLHQAVEAKEGVEIQNENQTLASITFQNYFRLYEKLAGMTGTADTEAFEFSSIYKLDTIVVPTNRPMIRKDLADLVYMTEQEKIGAIIEDIRERTANGQPVLVGTISIEKSEVVSAELTKAGIEHKVLNAKFHAMEAEIVSQAGQPGAVTIATNMAGRGTDIVLGGSWQSEIAALEDPTEEQIAAIKAAWQIRHDAVLASGGLHIIGTERHESRRIDNQLRGRAGRQGDAGSSRFYLSMEDALMRIFASDRVSGMMRKLGMKPGEAIEHPWVTKAIANAQRKVESRNFDIRKQLLEYDDVANDQRRAIYSQRNELLDVSDVSETINSIREDVFKTTIDSYIPTQSLEEMWDIEGLEQRLKNDFDLDMPIAKWLEDEPQLHEETLRERILQQAIETYQRKEEVVGIEMMRNFEKGVMLQTLDSLWKEHLAAMDYLRQGIHLRGYAQKDPKQEYKRESFAMFAAMLESLKYEVISVLSKVQVRMPEEVEALEVQRREEAERLARQQQLSHQTDNSALMSEEEVKVANSLERKVGRNDPCPCGSGKKYKQCHGRLQ</sequence>
<dbReference type="EC" id="7.4.2.8" evidence="1"/>
<dbReference type="EMBL" id="CP000720">
    <property type="protein sequence ID" value="ABS46199.1"/>
    <property type="molecule type" value="Genomic_DNA"/>
</dbReference>
<dbReference type="RefSeq" id="WP_002210426.1">
    <property type="nucleotide sequence ID" value="NC_009708.1"/>
</dbReference>
<dbReference type="SMR" id="A7FM57"/>
<dbReference type="GeneID" id="57974051"/>
<dbReference type="KEGG" id="ypi:YpsIP31758_3378"/>
<dbReference type="HOGENOM" id="CLU_005314_3_0_6"/>
<dbReference type="Proteomes" id="UP000002412">
    <property type="component" value="Chromosome"/>
</dbReference>
<dbReference type="GO" id="GO:0031522">
    <property type="term" value="C:cell envelope Sec protein transport complex"/>
    <property type="evidence" value="ECO:0007669"/>
    <property type="project" value="TreeGrafter"/>
</dbReference>
<dbReference type="GO" id="GO:0005829">
    <property type="term" value="C:cytosol"/>
    <property type="evidence" value="ECO:0007669"/>
    <property type="project" value="TreeGrafter"/>
</dbReference>
<dbReference type="GO" id="GO:0005886">
    <property type="term" value="C:plasma membrane"/>
    <property type="evidence" value="ECO:0007669"/>
    <property type="project" value="UniProtKB-SubCell"/>
</dbReference>
<dbReference type="GO" id="GO:0005524">
    <property type="term" value="F:ATP binding"/>
    <property type="evidence" value="ECO:0007669"/>
    <property type="project" value="UniProtKB-UniRule"/>
</dbReference>
<dbReference type="GO" id="GO:0046872">
    <property type="term" value="F:metal ion binding"/>
    <property type="evidence" value="ECO:0007669"/>
    <property type="project" value="UniProtKB-KW"/>
</dbReference>
<dbReference type="GO" id="GO:0008564">
    <property type="term" value="F:protein-exporting ATPase activity"/>
    <property type="evidence" value="ECO:0007669"/>
    <property type="project" value="UniProtKB-EC"/>
</dbReference>
<dbReference type="GO" id="GO:0065002">
    <property type="term" value="P:intracellular protein transmembrane transport"/>
    <property type="evidence" value="ECO:0007669"/>
    <property type="project" value="UniProtKB-UniRule"/>
</dbReference>
<dbReference type="GO" id="GO:0017038">
    <property type="term" value="P:protein import"/>
    <property type="evidence" value="ECO:0007669"/>
    <property type="project" value="InterPro"/>
</dbReference>
<dbReference type="GO" id="GO:0006605">
    <property type="term" value="P:protein targeting"/>
    <property type="evidence" value="ECO:0007669"/>
    <property type="project" value="UniProtKB-UniRule"/>
</dbReference>
<dbReference type="GO" id="GO:0043952">
    <property type="term" value="P:protein transport by the Sec complex"/>
    <property type="evidence" value="ECO:0007669"/>
    <property type="project" value="TreeGrafter"/>
</dbReference>
<dbReference type="CDD" id="cd17928">
    <property type="entry name" value="DEXDc_SecA"/>
    <property type="match status" value="1"/>
</dbReference>
<dbReference type="CDD" id="cd18803">
    <property type="entry name" value="SF2_C_secA"/>
    <property type="match status" value="1"/>
</dbReference>
<dbReference type="FunFam" id="1.10.3060.10:FF:000001">
    <property type="entry name" value="Preprotein translocase subunit SecA"/>
    <property type="match status" value="1"/>
</dbReference>
<dbReference type="FunFam" id="3.40.50.300:FF:000081">
    <property type="entry name" value="Preprotein translocase subunit SecA"/>
    <property type="match status" value="1"/>
</dbReference>
<dbReference type="FunFam" id="3.40.50.300:FF:000113">
    <property type="entry name" value="Preprotein translocase subunit SecA"/>
    <property type="match status" value="1"/>
</dbReference>
<dbReference type="FunFam" id="3.90.1440.10:FF:000001">
    <property type="entry name" value="Preprotein translocase subunit SecA"/>
    <property type="match status" value="1"/>
</dbReference>
<dbReference type="Gene3D" id="1.10.3060.10">
    <property type="entry name" value="Helical scaffold and wing domains of SecA"/>
    <property type="match status" value="1"/>
</dbReference>
<dbReference type="Gene3D" id="3.40.50.300">
    <property type="entry name" value="P-loop containing nucleotide triphosphate hydrolases"/>
    <property type="match status" value="2"/>
</dbReference>
<dbReference type="Gene3D" id="3.90.1440.10">
    <property type="entry name" value="SecA, preprotein cross-linking domain"/>
    <property type="match status" value="1"/>
</dbReference>
<dbReference type="HAMAP" id="MF_01382">
    <property type="entry name" value="SecA"/>
    <property type="match status" value="1"/>
</dbReference>
<dbReference type="InterPro" id="IPR014001">
    <property type="entry name" value="Helicase_ATP-bd"/>
</dbReference>
<dbReference type="InterPro" id="IPR027417">
    <property type="entry name" value="P-loop_NTPase"/>
</dbReference>
<dbReference type="InterPro" id="IPR004027">
    <property type="entry name" value="SEC_C_motif"/>
</dbReference>
<dbReference type="InterPro" id="IPR000185">
    <property type="entry name" value="SecA"/>
</dbReference>
<dbReference type="InterPro" id="IPR020937">
    <property type="entry name" value="SecA_CS"/>
</dbReference>
<dbReference type="InterPro" id="IPR011115">
    <property type="entry name" value="SecA_DEAD"/>
</dbReference>
<dbReference type="InterPro" id="IPR014018">
    <property type="entry name" value="SecA_motor_DEAD"/>
</dbReference>
<dbReference type="InterPro" id="IPR011130">
    <property type="entry name" value="SecA_preprotein_X-link_dom"/>
</dbReference>
<dbReference type="InterPro" id="IPR044722">
    <property type="entry name" value="SecA_SF2_C"/>
</dbReference>
<dbReference type="InterPro" id="IPR011116">
    <property type="entry name" value="SecA_Wing/Scaffold"/>
</dbReference>
<dbReference type="InterPro" id="IPR036266">
    <property type="entry name" value="SecA_Wing/Scaffold_sf"/>
</dbReference>
<dbReference type="InterPro" id="IPR036670">
    <property type="entry name" value="SecA_X-link_sf"/>
</dbReference>
<dbReference type="NCBIfam" id="NF009538">
    <property type="entry name" value="PRK12904.1"/>
    <property type="match status" value="1"/>
</dbReference>
<dbReference type="NCBIfam" id="TIGR00963">
    <property type="entry name" value="secA"/>
    <property type="match status" value="1"/>
</dbReference>
<dbReference type="PANTHER" id="PTHR30612:SF0">
    <property type="entry name" value="CHLOROPLAST PROTEIN-TRANSPORTING ATPASE"/>
    <property type="match status" value="1"/>
</dbReference>
<dbReference type="PANTHER" id="PTHR30612">
    <property type="entry name" value="SECA INNER MEMBRANE COMPONENT OF SEC PROTEIN SECRETION SYSTEM"/>
    <property type="match status" value="1"/>
</dbReference>
<dbReference type="Pfam" id="PF21090">
    <property type="entry name" value="P-loop_SecA"/>
    <property type="match status" value="1"/>
</dbReference>
<dbReference type="Pfam" id="PF02810">
    <property type="entry name" value="SEC-C"/>
    <property type="match status" value="1"/>
</dbReference>
<dbReference type="Pfam" id="PF07517">
    <property type="entry name" value="SecA_DEAD"/>
    <property type="match status" value="1"/>
</dbReference>
<dbReference type="Pfam" id="PF01043">
    <property type="entry name" value="SecA_PP_bind"/>
    <property type="match status" value="1"/>
</dbReference>
<dbReference type="Pfam" id="PF07516">
    <property type="entry name" value="SecA_SW"/>
    <property type="match status" value="1"/>
</dbReference>
<dbReference type="PRINTS" id="PR00906">
    <property type="entry name" value="SECA"/>
</dbReference>
<dbReference type="SMART" id="SM00957">
    <property type="entry name" value="SecA_DEAD"/>
    <property type="match status" value="1"/>
</dbReference>
<dbReference type="SMART" id="SM00958">
    <property type="entry name" value="SecA_PP_bind"/>
    <property type="match status" value="1"/>
</dbReference>
<dbReference type="SUPFAM" id="SSF81886">
    <property type="entry name" value="Helical scaffold and wing domains of SecA"/>
    <property type="match status" value="1"/>
</dbReference>
<dbReference type="SUPFAM" id="SSF52540">
    <property type="entry name" value="P-loop containing nucleoside triphosphate hydrolases"/>
    <property type="match status" value="2"/>
</dbReference>
<dbReference type="SUPFAM" id="SSF81767">
    <property type="entry name" value="Pre-protein crosslinking domain of SecA"/>
    <property type="match status" value="1"/>
</dbReference>
<dbReference type="PROSITE" id="PS01312">
    <property type="entry name" value="SECA"/>
    <property type="match status" value="1"/>
</dbReference>
<dbReference type="PROSITE" id="PS51196">
    <property type="entry name" value="SECA_MOTOR_DEAD"/>
    <property type="match status" value="1"/>
</dbReference>
<protein>
    <recommendedName>
        <fullName evidence="1">Protein translocase subunit SecA</fullName>
        <ecNumber evidence="1">7.4.2.8</ecNumber>
    </recommendedName>
</protein>
<organism>
    <name type="scientific">Yersinia pseudotuberculosis serotype O:1b (strain IP 31758)</name>
    <dbReference type="NCBI Taxonomy" id="349747"/>
    <lineage>
        <taxon>Bacteria</taxon>
        <taxon>Pseudomonadati</taxon>
        <taxon>Pseudomonadota</taxon>
        <taxon>Gammaproteobacteria</taxon>
        <taxon>Enterobacterales</taxon>
        <taxon>Yersiniaceae</taxon>
        <taxon>Yersinia</taxon>
    </lineage>
</organism>
<accession>A7FM57</accession>
<reference key="1">
    <citation type="journal article" date="2007" name="PLoS Genet.">
        <title>The complete genome sequence of Yersinia pseudotuberculosis IP31758, the causative agent of Far East scarlet-like fever.</title>
        <authorList>
            <person name="Eppinger M."/>
            <person name="Rosovitz M.J."/>
            <person name="Fricke W.F."/>
            <person name="Rasko D.A."/>
            <person name="Kokorina G."/>
            <person name="Fayolle C."/>
            <person name="Lindler L.E."/>
            <person name="Carniel E."/>
            <person name="Ravel J."/>
        </authorList>
    </citation>
    <scope>NUCLEOTIDE SEQUENCE [LARGE SCALE GENOMIC DNA]</scope>
    <source>
        <strain>IP 31758</strain>
    </source>
</reference>
<keyword id="KW-0067">ATP-binding</keyword>
<keyword id="KW-0997">Cell inner membrane</keyword>
<keyword id="KW-1003">Cell membrane</keyword>
<keyword id="KW-0963">Cytoplasm</keyword>
<keyword id="KW-0472">Membrane</keyword>
<keyword id="KW-0479">Metal-binding</keyword>
<keyword id="KW-0547">Nucleotide-binding</keyword>
<keyword id="KW-0653">Protein transport</keyword>
<keyword id="KW-1278">Translocase</keyword>
<keyword id="KW-0811">Translocation</keyword>
<keyword id="KW-0813">Transport</keyword>
<keyword id="KW-0862">Zinc</keyword>